<sequence length="890" mass="99945">MAASVDQRPYPGLHNGVVRPLKPGPDIPRPKKLPQAPPPLSDSSSDEEEDTTLNLKDLIRKGTTEVESSIFDPRDDGTSDHWIQRNSSLVRLTGKHPFNSEPPLPRLMHHGFITPVPLHYVRNHGPVPRARWEDWTVEVTGLVTRPTCFTMEQLLHDFPSREFPATLVCAGNRRKEQNMVKQSIGFNWGAAAISTSVWRGVPLRTLLKSCGIYTRTKGALHVCFEGAEDLPGGGGSKYGTSILREVALDPSRDIILAYMQNGEPLSPDHGFPVRMIIPGFIGGRMVKWLKRIIVTTDQSQNYYHYKDNRVLPSHVDAELANAQAWWYKPDYIINELNINSVITTPCHEEILPINSWTTQMPYFIRGYAYSGGGRKVTRVEVTLDGGETWQVCTLDCPEKPNKYGKYWCWCLWSVEVEVLDLLGAREIAVRAWDEALNTQPEKLIWNVMGMMNNCWFRVKTNVCRPHKGEIGIVFEHPTQPGNQSGGWMAKEKHLEKSSESNPTLKKSVSSPFMNTTSKTYTMSEVRRHNNADSAWIIVHGHVYDCTRFLKDHPGGTDSILINAGTDCTEEFEAIHSDKAKQMLEDYRIGELTTTCYNSDSSSSNPSVHGSSDTIPLTPIKEVITPMRSVALNPREKIPCKLISKTSISHDVRLFRFALPSDDLLMGLPVGKHIFLCATVDEKLCMRAYTPTSSVHEVGYFDLVVKVYFKGVHPKFPTGGIMSQHLDSLPIGSVLDVKGPLGHIVYTGRGNFLVHGKPRFATRLAMLAGGTGITPIYQVVRAILKDPEDCTEMHVVYANRTEDDILLKEELDEWAKKYDRLKVWYVIQASIREGWEYSVGFITESILTEHIPNASPDTLALTCGPPPMIQFAVQPNLEKLGYDTQNNLLVF</sequence>
<comment type="function">
    <text>Nitrate reductase is a key enzyme involved in the first step of nitrate assimilation in plants, fungi and bacteria.</text>
</comment>
<comment type="catalytic activity">
    <reaction>
        <text>nitrite + NAD(+) + H2O = nitrate + NADH + H(+)</text>
        <dbReference type="Rhea" id="RHEA:17913"/>
        <dbReference type="ChEBI" id="CHEBI:15377"/>
        <dbReference type="ChEBI" id="CHEBI:15378"/>
        <dbReference type="ChEBI" id="CHEBI:16301"/>
        <dbReference type="ChEBI" id="CHEBI:17632"/>
        <dbReference type="ChEBI" id="CHEBI:57540"/>
        <dbReference type="ChEBI" id="CHEBI:57945"/>
        <dbReference type="EC" id="1.7.1.1"/>
    </reaction>
</comment>
<comment type="cofactor">
    <cofactor evidence="1">
        <name>FAD</name>
        <dbReference type="ChEBI" id="CHEBI:57692"/>
    </cofactor>
    <text evidence="1">Binds 1 FAD.</text>
</comment>
<comment type="cofactor">
    <cofactor evidence="1">
        <name>heme</name>
        <dbReference type="ChEBI" id="CHEBI:30413"/>
    </cofactor>
    <text evidence="1">Binds 1 heme group. The heme group is called cytochrome b-557.</text>
</comment>
<comment type="cofactor">
    <cofactor evidence="1">
        <name>Mo-molybdopterin</name>
        <dbReference type="ChEBI" id="CHEBI:71302"/>
    </cofactor>
    <text evidence="1">Binds 1 Mo-molybdopterin (Mo-MPT) cofactor per subunit.</text>
</comment>
<comment type="subunit">
    <text evidence="1">Homodimer.</text>
</comment>
<comment type="similarity">
    <text evidence="9">Belongs to the nitrate reductase family.</text>
</comment>
<reference key="1">
    <citation type="journal article" date="1995" name="Plant Mol. Biol.">
        <title>Identification of cDNA clones corresponding to two inducible nitrate reductase genes in soybean: analysis in wild-type and nr1 mutant.</title>
        <authorList>
            <person name="Wu S."/>
            <person name="Lu Q."/>
            <person name="Kriz A.L."/>
            <person name="Harper J.E."/>
        </authorList>
    </citation>
    <scope>NUCLEOTIDE SEQUENCE [MRNA]</scope>
    <source>
        <strain>cv. Williams</strain>
    </source>
</reference>
<accession>P39870</accession>
<protein>
    <recommendedName>
        <fullName>Inducible nitrate reductase [NADH] 2</fullName>
        <shortName>NR</shortName>
        <ecNumber>1.7.1.1</ecNumber>
    </recommendedName>
</protein>
<dbReference type="EC" id="1.7.1.1"/>
<dbReference type="EMBL" id="U13987">
    <property type="protein sequence ID" value="AAA96813.1"/>
    <property type="molecule type" value="mRNA"/>
</dbReference>
<dbReference type="PIR" id="S66308">
    <property type="entry name" value="S66308"/>
</dbReference>
<dbReference type="RefSeq" id="NP_001238150.1">
    <property type="nucleotide sequence ID" value="NM_001251221.1"/>
</dbReference>
<dbReference type="SMR" id="P39870"/>
<dbReference type="FunCoup" id="P39870">
    <property type="interactions" value="303"/>
</dbReference>
<dbReference type="STRING" id="3847.P39870"/>
<dbReference type="PaxDb" id="3847-GLYMA06G11430.1"/>
<dbReference type="GeneID" id="732634"/>
<dbReference type="KEGG" id="gmx:732634"/>
<dbReference type="eggNOG" id="KOG0534">
    <property type="taxonomic scope" value="Eukaryota"/>
</dbReference>
<dbReference type="eggNOG" id="KOG0535">
    <property type="taxonomic scope" value="Eukaryota"/>
</dbReference>
<dbReference type="eggNOG" id="KOG0537">
    <property type="taxonomic scope" value="Eukaryota"/>
</dbReference>
<dbReference type="InParanoid" id="P39870"/>
<dbReference type="OrthoDB" id="432685at2759"/>
<dbReference type="Proteomes" id="UP000008827">
    <property type="component" value="Unplaced"/>
</dbReference>
<dbReference type="GO" id="GO:0071949">
    <property type="term" value="F:FAD binding"/>
    <property type="evidence" value="ECO:0000250"/>
    <property type="project" value="UniProtKB"/>
</dbReference>
<dbReference type="GO" id="GO:0020037">
    <property type="term" value="F:heme binding"/>
    <property type="evidence" value="ECO:0007669"/>
    <property type="project" value="InterPro"/>
</dbReference>
<dbReference type="GO" id="GO:0030151">
    <property type="term" value="F:molybdenum ion binding"/>
    <property type="evidence" value="ECO:0000250"/>
    <property type="project" value="UniProtKB"/>
</dbReference>
<dbReference type="GO" id="GO:0043546">
    <property type="term" value="F:molybdopterin cofactor binding"/>
    <property type="evidence" value="ECO:0007669"/>
    <property type="project" value="InterPro"/>
</dbReference>
<dbReference type="GO" id="GO:0009703">
    <property type="term" value="F:nitrate reductase (NADH) activity"/>
    <property type="evidence" value="ECO:0000318"/>
    <property type="project" value="GO_Central"/>
</dbReference>
<dbReference type="GO" id="GO:0050464">
    <property type="term" value="F:nitrate reductase (NADPH) activity"/>
    <property type="evidence" value="ECO:0007669"/>
    <property type="project" value="InterPro"/>
</dbReference>
<dbReference type="GO" id="GO:0042128">
    <property type="term" value="P:nitrate assimilation"/>
    <property type="evidence" value="ECO:0000318"/>
    <property type="project" value="GO_Central"/>
</dbReference>
<dbReference type="GO" id="GO:0006809">
    <property type="term" value="P:nitric oxide biosynthetic process"/>
    <property type="evidence" value="ECO:0000318"/>
    <property type="project" value="GO_Central"/>
</dbReference>
<dbReference type="CDD" id="cd06183">
    <property type="entry name" value="cyt_b5_reduct_like"/>
    <property type="match status" value="1"/>
</dbReference>
<dbReference type="CDD" id="cd02112">
    <property type="entry name" value="eukary_NR_Moco"/>
    <property type="match status" value="1"/>
</dbReference>
<dbReference type="FunFam" id="2.40.30.10:FF:000021">
    <property type="entry name" value="NADH-cytochrome b5 reductase"/>
    <property type="match status" value="1"/>
</dbReference>
<dbReference type="FunFam" id="2.60.40.650:FF:000001">
    <property type="entry name" value="Nitrate reductase"/>
    <property type="match status" value="1"/>
</dbReference>
<dbReference type="FunFam" id="3.10.120.10:FF:000008">
    <property type="entry name" value="Nitrate reductase"/>
    <property type="match status" value="1"/>
</dbReference>
<dbReference type="FunFam" id="3.90.420.10:FF:000003">
    <property type="entry name" value="Nitrate reductase"/>
    <property type="match status" value="1"/>
</dbReference>
<dbReference type="FunFam" id="3.40.50.80:FF:000025">
    <property type="entry name" value="Nitrate reductase [NADH]"/>
    <property type="match status" value="1"/>
</dbReference>
<dbReference type="Gene3D" id="2.60.40.650">
    <property type="match status" value="1"/>
</dbReference>
<dbReference type="Gene3D" id="3.10.120.10">
    <property type="entry name" value="Cytochrome b5-like heme/steroid binding domain"/>
    <property type="match status" value="1"/>
</dbReference>
<dbReference type="Gene3D" id="3.40.50.80">
    <property type="entry name" value="Nucleotide-binding domain of ferredoxin-NADP reductase (FNR) module"/>
    <property type="match status" value="1"/>
</dbReference>
<dbReference type="Gene3D" id="3.90.420.10">
    <property type="entry name" value="Oxidoreductase, molybdopterin-binding domain"/>
    <property type="match status" value="1"/>
</dbReference>
<dbReference type="Gene3D" id="2.40.30.10">
    <property type="entry name" value="Translation factors"/>
    <property type="match status" value="1"/>
</dbReference>
<dbReference type="InterPro" id="IPR008333">
    <property type="entry name" value="Cbr1-like_FAD-bd_dom"/>
</dbReference>
<dbReference type="InterPro" id="IPR001199">
    <property type="entry name" value="Cyt_B5-like_heme/steroid-bd"/>
</dbReference>
<dbReference type="InterPro" id="IPR036400">
    <property type="entry name" value="Cyt_B5-like_heme/steroid_sf"/>
</dbReference>
<dbReference type="InterPro" id="IPR018506">
    <property type="entry name" value="Cyt_B5_heme-BS"/>
</dbReference>
<dbReference type="InterPro" id="IPR017927">
    <property type="entry name" value="FAD-bd_FR_type"/>
</dbReference>
<dbReference type="InterPro" id="IPR001709">
    <property type="entry name" value="Flavoprot_Pyr_Nucl_cyt_Rdtase"/>
</dbReference>
<dbReference type="InterPro" id="IPR039261">
    <property type="entry name" value="FNR_nucleotide-bd"/>
</dbReference>
<dbReference type="InterPro" id="IPR014756">
    <property type="entry name" value="Ig_E-set"/>
</dbReference>
<dbReference type="InterPro" id="IPR005066">
    <property type="entry name" value="MoCF_OxRdtse_dimer"/>
</dbReference>
<dbReference type="InterPro" id="IPR008335">
    <property type="entry name" value="Mopterin_OxRdtase_euk"/>
</dbReference>
<dbReference type="InterPro" id="IPR012137">
    <property type="entry name" value="Nitr_rd_NADH"/>
</dbReference>
<dbReference type="InterPro" id="IPR001433">
    <property type="entry name" value="OxRdtase_FAD/NAD-bd"/>
</dbReference>
<dbReference type="InterPro" id="IPR000572">
    <property type="entry name" value="OxRdtase_Mopterin-bd_dom"/>
</dbReference>
<dbReference type="InterPro" id="IPR036374">
    <property type="entry name" value="OxRdtase_Mopterin-bd_sf"/>
</dbReference>
<dbReference type="InterPro" id="IPR022407">
    <property type="entry name" value="OxRdtase_Mopterin_BS"/>
</dbReference>
<dbReference type="InterPro" id="IPR017938">
    <property type="entry name" value="Riboflavin_synthase-like_b-brl"/>
</dbReference>
<dbReference type="PANTHER" id="PTHR19372:SF7">
    <property type="entry name" value="SULFITE OXIDASE, MITOCHONDRIAL"/>
    <property type="match status" value="1"/>
</dbReference>
<dbReference type="PANTHER" id="PTHR19372">
    <property type="entry name" value="SULFITE REDUCTASE"/>
    <property type="match status" value="1"/>
</dbReference>
<dbReference type="Pfam" id="PF00173">
    <property type="entry name" value="Cyt-b5"/>
    <property type="match status" value="1"/>
</dbReference>
<dbReference type="Pfam" id="PF00970">
    <property type="entry name" value="FAD_binding_6"/>
    <property type="match status" value="1"/>
</dbReference>
<dbReference type="Pfam" id="PF03404">
    <property type="entry name" value="Mo-co_dimer"/>
    <property type="match status" value="1"/>
</dbReference>
<dbReference type="Pfam" id="PF00175">
    <property type="entry name" value="NAD_binding_1"/>
    <property type="match status" value="1"/>
</dbReference>
<dbReference type="Pfam" id="PF00174">
    <property type="entry name" value="Oxidored_molyb"/>
    <property type="match status" value="1"/>
</dbReference>
<dbReference type="PIRSF" id="PIRSF000233">
    <property type="entry name" value="Nitr_rd_NADH"/>
    <property type="match status" value="1"/>
</dbReference>
<dbReference type="PRINTS" id="PR00406">
    <property type="entry name" value="CYTB5RDTASE"/>
</dbReference>
<dbReference type="PRINTS" id="PR00363">
    <property type="entry name" value="CYTOCHROMEB5"/>
</dbReference>
<dbReference type="PRINTS" id="PR00407">
    <property type="entry name" value="EUMOPTERIN"/>
</dbReference>
<dbReference type="PRINTS" id="PR00371">
    <property type="entry name" value="FPNCR"/>
</dbReference>
<dbReference type="SMART" id="SM01117">
    <property type="entry name" value="Cyt-b5"/>
    <property type="match status" value="1"/>
</dbReference>
<dbReference type="SUPFAM" id="SSF55856">
    <property type="entry name" value="Cytochrome b5-like heme/steroid binding domain"/>
    <property type="match status" value="1"/>
</dbReference>
<dbReference type="SUPFAM" id="SSF81296">
    <property type="entry name" value="E set domains"/>
    <property type="match status" value="1"/>
</dbReference>
<dbReference type="SUPFAM" id="SSF52343">
    <property type="entry name" value="Ferredoxin reductase-like, C-terminal NADP-linked domain"/>
    <property type="match status" value="1"/>
</dbReference>
<dbReference type="SUPFAM" id="SSF56524">
    <property type="entry name" value="Oxidoreductase molybdopterin-binding domain"/>
    <property type="match status" value="1"/>
</dbReference>
<dbReference type="SUPFAM" id="SSF63380">
    <property type="entry name" value="Riboflavin synthase domain-like"/>
    <property type="match status" value="1"/>
</dbReference>
<dbReference type="PROSITE" id="PS00191">
    <property type="entry name" value="CYTOCHROME_B5_1"/>
    <property type="match status" value="1"/>
</dbReference>
<dbReference type="PROSITE" id="PS50255">
    <property type="entry name" value="CYTOCHROME_B5_2"/>
    <property type="match status" value="1"/>
</dbReference>
<dbReference type="PROSITE" id="PS51384">
    <property type="entry name" value="FAD_FR"/>
    <property type="match status" value="1"/>
</dbReference>
<dbReference type="PROSITE" id="PS00559">
    <property type="entry name" value="MOLYBDOPTERIN_EUK"/>
    <property type="match status" value="1"/>
</dbReference>
<keyword id="KW-1015">Disulfide bond</keyword>
<keyword id="KW-0274">FAD</keyword>
<keyword id="KW-0285">Flavoprotein</keyword>
<keyword id="KW-0349">Heme</keyword>
<keyword id="KW-0408">Iron</keyword>
<keyword id="KW-0479">Metal-binding</keyword>
<keyword id="KW-0500">Molybdenum</keyword>
<keyword id="KW-0520">NAD</keyword>
<keyword id="KW-0534">Nitrate assimilation</keyword>
<keyword id="KW-0560">Oxidoreductase</keyword>
<keyword id="KW-1185">Reference proteome</keyword>
<name>NIA2_SOYBN</name>
<organism>
    <name type="scientific">Glycine max</name>
    <name type="common">Soybean</name>
    <name type="synonym">Glycine hispida</name>
    <dbReference type="NCBI Taxonomy" id="3847"/>
    <lineage>
        <taxon>Eukaryota</taxon>
        <taxon>Viridiplantae</taxon>
        <taxon>Streptophyta</taxon>
        <taxon>Embryophyta</taxon>
        <taxon>Tracheophyta</taxon>
        <taxon>Spermatophyta</taxon>
        <taxon>Magnoliopsida</taxon>
        <taxon>eudicotyledons</taxon>
        <taxon>Gunneridae</taxon>
        <taxon>Pentapetalae</taxon>
        <taxon>rosids</taxon>
        <taxon>fabids</taxon>
        <taxon>Fabales</taxon>
        <taxon>Fabaceae</taxon>
        <taxon>Papilionoideae</taxon>
        <taxon>50 kb inversion clade</taxon>
        <taxon>NPAAA clade</taxon>
        <taxon>indigoferoid/millettioid clade</taxon>
        <taxon>Phaseoleae</taxon>
        <taxon>Glycine</taxon>
        <taxon>Glycine subgen. Soja</taxon>
    </lineage>
</organism>
<evidence type="ECO:0000250" key="1"/>
<evidence type="ECO:0000250" key="2">
    <source>
        <dbReference type="UniProtKB" id="A0A286R227"/>
    </source>
</evidence>
<evidence type="ECO:0000250" key="3">
    <source>
        <dbReference type="UniProtKB" id="P17571"/>
    </source>
</evidence>
<evidence type="ECO:0000250" key="4">
    <source>
        <dbReference type="UniProtKB" id="P49050"/>
    </source>
</evidence>
<evidence type="ECO:0000255" key="5"/>
<evidence type="ECO:0000255" key="6">
    <source>
        <dbReference type="PROSITE-ProRule" id="PRU00279"/>
    </source>
</evidence>
<evidence type="ECO:0000255" key="7">
    <source>
        <dbReference type="PROSITE-ProRule" id="PRU00716"/>
    </source>
</evidence>
<evidence type="ECO:0000256" key="8">
    <source>
        <dbReference type="SAM" id="MobiDB-lite"/>
    </source>
</evidence>
<evidence type="ECO:0000305" key="9"/>
<gene>
    <name type="primary">INR2</name>
</gene>
<proteinExistence type="evidence at transcript level"/>
<feature type="chain" id="PRO_0000166070" description="Inducible nitrate reductase [NADH] 2">
    <location>
        <begin position="1"/>
        <end position="890"/>
    </location>
</feature>
<feature type="domain" description="Cytochrome b5 heme-binding" evidence="6">
    <location>
        <begin position="517"/>
        <end position="592"/>
    </location>
</feature>
<feature type="domain" description="FAD-binding FR-type" evidence="7">
    <location>
        <begin position="634"/>
        <end position="746"/>
    </location>
</feature>
<feature type="region of interest" description="Disordered" evidence="8">
    <location>
        <begin position="1"/>
        <end position="51"/>
    </location>
</feature>
<feature type="binding site" evidence="4">
    <location>
        <position position="169"/>
    </location>
    <ligand>
        <name>Mo-molybdopterin</name>
        <dbReference type="ChEBI" id="CHEBI:71302"/>
    </ligand>
    <ligandPart>
        <name>Mo</name>
        <dbReference type="ChEBI" id="CHEBI:28685"/>
    </ligandPart>
</feature>
<feature type="binding site" description="axial binding residue" evidence="6">
    <location>
        <position position="552"/>
    </location>
    <ligand>
        <name>heme</name>
        <dbReference type="ChEBI" id="CHEBI:30413"/>
    </ligand>
    <ligandPart>
        <name>Fe</name>
        <dbReference type="ChEBI" id="CHEBI:18248"/>
    </ligandPart>
</feature>
<feature type="binding site" description="axial binding residue" evidence="6">
    <location>
        <position position="575"/>
    </location>
    <ligand>
        <name>heme</name>
        <dbReference type="ChEBI" id="CHEBI:30413"/>
    </ligand>
    <ligandPart>
        <name>Fe</name>
        <dbReference type="ChEBI" id="CHEBI:18248"/>
    </ligandPart>
</feature>
<feature type="binding site" evidence="2">
    <location>
        <begin position="686"/>
        <end position="689"/>
    </location>
    <ligand>
        <name>FAD</name>
        <dbReference type="ChEBI" id="CHEBI:57692"/>
    </ligand>
</feature>
<feature type="binding site" evidence="2">
    <location>
        <begin position="703"/>
        <end position="707"/>
    </location>
    <ligand>
        <name>FAD</name>
        <dbReference type="ChEBI" id="CHEBI:57692"/>
    </ligand>
</feature>
<feature type="binding site" evidence="3">
    <location>
        <position position="708"/>
    </location>
    <ligand>
        <name>FAD</name>
        <dbReference type="ChEBI" id="CHEBI:57692"/>
    </ligand>
</feature>
<feature type="binding site" evidence="2">
    <location>
        <position position="715"/>
    </location>
    <ligand>
        <name>FAD</name>
        <dbReference type="ChEBI" id="CHEBI:57692"/>
    </ligand>
</feature>
<feature type="binding site" evidence="2">
    <location>
        <begin position="720"/>
        <end position="722"/>
    </location>
    <ligand>
        <name>FAD</name>
        <dbReference type="ChEBI" id="CHEBI:57692"/>
    </ligand>
</feature>
<feature type="binding site" evidence="2">
    <location>
        <position position="773"/>
    </location>
    <ligand>
        <name>FAD</name>
        <dbReference type="ChEBI" id="CHEBI:57692"/>
    </ligand>
</feature>
<feature type="disulfide bond" description="Interchain" evidence="5">
    <location>
        <position position="408"/>
    </location>
</feature>